<name>TGT_METFK</name>
<comment type="function">
    <text evidence="1">Catalyzes the base-exchange of a guanine (G) residue with the queuine precursor 7-aminomethyl-7-deazaguanine (PreQ1) at position 34 (anticodon wobble position) in tRNAs with GU(N) anticodons (tRNA-Asp, -Asn, -His and -Tyr). Catalysis occurs through a double-displacement mechanism. The nucleophile active site attacks the C1' of nucleotide 34 to detach the guanine base from the RNA, forming a covalent enzyme-RNA intermediate. The proton acceptor active site deprotonates the incoming PreQ1, allowing a nucleophilic attack on the C1' of the ribose to form the product. After dissociation, two additional enzymatic reactions on the tRNA convert PreQ1 to queuine (Q), resulting in the hypermodified nucleoside queuosine (7-(((4,5-cis-dihydroxy-2-cyclopenten-1-yl)amino)methyl)-7-deazaguanosine).</text>
</comment>
<comment type="catalytic activity">
    <reaction evidence="1">
        <text>7-aminomethyl-7-carbaguanine + guanosine(34) in tRNA = 7-aminomethyl-7-carbaguanosine(34) in tRNA + guanine</text>
        <dbReference type="Rhea" id="RHEA:24104"/>
        <dbReference type="Rhea" id="RHEA-COMP:10341"/>
        <dbReference type="Rhea" id="RHEA-COMP:10342"/>
        <dbReference type="ChEBI" id="CHEBI:16235"/>
        <dbReference type="ChEBI" id="CHEBI:58703"/>
        <dbReference type="ChEBI" id="CHEBI:74269"/>
        <dbReference type="ChEBI" id="CHEBI:82833"/>
        <dbReference type="EC" id="2.4.2.29"/>
    </reaction>
</comment>
<comment type="cofactor">
    <cofactor evidence="1">
        <name>Zn(2+)</name>
        <dbReference type="ChEBI" id="CHEBI:29105"/>
    </cofactor>
    <text evidence="1">Binds 1 zinc ion per subunit.</text>
</comment>
<comment type="pathway">
    <text evidence="1">tRNA modification; tRNA-queuosine biosynthesis.</text>
</comment>
<comment type="subunit">
    <text evidence="1">Homodimer. Within each dimer, one monomer is responsible for RNA recognition and catalysis, while the other monomer binds to the replacement base PreQ1.</text>
</comment>
<comment type="similarity">
    <text evidence="1">Belongs to the queuine tRNA-ribosyltransferase family.</text>
</comment>
<accession>Q1H403</accession>
<reference key="1">
    <citation type="submission" date="2006-03" db="EMBL/GenBank/DDBJ databases">
        <title>Complete sequence of Methylobacillus flagellatus KT.</title>
        <authorList>
            <consortium name="US DOE Joint Genome Institute"/>
            <person name="Copeland A."/>
            <person name="Lucas S."/>
            <person name="Lapidus A."/>
            <person name="Barry K."/>
            <person name="Detter J.C."/>
            <person name="Glavina del Rio T."/>
            <person name="Hammon N."/>
            <person name="Israni S."/>
            <person name="Dalin E."/>
            <person name="Tice H."/>
            <person name="Pitluck S."/>
            <person name="Brettin T."/>
            <person name="Bruce D."/>
            <person name="Han C."/>
            <person name="Tapia R."/>
            <person name="Saunders E."/>
            <person name="Gilna P."/>
            <person name="Schmutz J."/>
            <person name="Larimer F."/>
            <person name="Land M."/>
            <person name="Kyrpides N."/>
            <person name="Anderson I."/>
            <person name="Richardson P."/>
        </authorList>
    </citation>
    <scope>NUCLEOTIDE SEQUENCE [LARGE SCALE GENOMIC DNA]</scope>
    <source>
        <strain>ATCC 51484 / DSM 6875 / VKM B-1610 / KT</strain>
    </source>
</reference>
<feature type="chain" id="PRO_1000016815" description="Queuine tRNA-ribosyltransferase">
    <location>
        <begin position="1"/>
        <end position="370"/>
    </location>
</feature>
<feature type="region of interest" description="RNA binding" evidence="1">
    <location>
        <begin position="243"/>
        <end position="249"/>
    </location>
</feature>
<feature type="region of interest" description="RNA binding; important for wobble base 34 recognition" evidence="1">
    <location>
        <begin position="267"/>
        <end position="271"/>
    </location>
</feature>
<feature type="active site" description="Proton acceptor" evidence="1">
    <location>
        <position position="89"/>
    </location>
</feature>
<feature type="active site" description="Nucleophile" evidence="1">
    <location>
        <position position="262"/>
    </location>
</feature>
<feature type="binding site" evidence="1">
    <location>
        <begin position="89"/>
        <end position="93"/>
    </location>
    <ligand>
        <name>substrate</name>
    </ligand>
</feature>
<feature type="binding site" evidence="1">
    <location>
        <position position="143"/>
    </location>
    <ligand>
        <name>substrate</name>
    </ligand>
</feature>
<feature type="binding site" evidence="1">
    <location>
        <position position="185"/>
    </location>
    <ligand>
        <name>substrate</name>
    </ligand>
</feature>
<feature type="binding site" evidence="1">
    <location>
        <position position="212"/>
    </location>
    <ligand>
        <name>substrate</name>
    </ligand>
</feature>
<feature type="binding site" evidence="1">
    <location>
        <position position="300"/>
    </location>
    <ligand>
        <name>Zn(2+)</name>
        <dbReference type="ChEBI" id="CHEBI:29105"/>
    </ligand>
</feature>
<feature type="binding site" evidence="1">
    <location>
        <position position="302"/>
    </location>
    <ligand>
        <name>Zn(2+)</name>
        <dbReference type="ChEBI" id="CHEBI:29105"/>
    </ligand>
</feature>
<feature type="binding site" evidence="1">
    <location>
        <position position="305"/>
    </location>
    <ligand>
        <name>Zn(2+)</name>
        <dbReference type="ChEBI" id="CHEBI:29105"/>
    </ligand>
</feature>
<feature type="binding site" evidence="1">
    <location>
        <position position="331"/>
    </location>
    <ligand>
        <name>Zn(2+)</name>
        <dbReference type="ChEBI" id="CHEBI:29105"/>
    </ligand>
</feature>
<gene>
    <name evidence="1" type="primary">tgt</name>
    <name type="ordered locus">Mfla_0514</name>
</gene>
<keyword id="KW-0328">Glycosyltransferase</keyword>
<keyword id="KW-0479">Metal-binding</keyword>
<keyword id="KW-0671">Queuosine biosynthesis</keyword>
<keyword id="KW-1185">Reference proteome</keyword>
<keyword id="KW-0808">Transferase</keyword>
<keyword id="KW-0819">tRNA processing</keyword>
<keyword id="KW-0862">Zinc</keyword>
<organism>
    <name type="scientific">Methylobacillus flagellatus (strain ATCC 51484 / DSM 6875 / VKM B-1610 / KT)</name>
    <dbReference type="NCBI Taxonomy" id="265072"/>
    <lineage>
        <taxon>Bacteria</taxon>
        <taxon>Pseudomonadati</taxon>
        <taxon>Pseudomonadota</taxon>
        <taxon>Betaproteobacteria</taxon>
        <taxon>Nitrosomonadales</taxon>
        <taxon>Methylophilaceae</taxon>
        <taxon>Methylobacillus</taxon>
    </lineage>
</organism>
<evidence type="ECO:0000255" key="1">
    <source>
        <dbReference type="HAMAP-Rule" id="MF_00168"/>
    </source>
</evidence>
<protein>
    <recommendedName>
        <fullName evidence="1">Queuine tRNA-ribosyltransferase</fullName>
        <ecNumber evidence="1">2.4.2.29</ecNumber>
    </recommendedName>
    <alternativeName>
        <fullName evidence="1">Guanine insertion enzyme</fullName>
    </alternativeName>
    <alternativeName>
        <fullName evidence="1">tRNA-guanine transglycosylase</fullName>
    </alternativeName>
</protein>
<dbReference type="EC" id="2.4.2.29" evidence="1"/>
<dbReference type="EMBL" id="CP000284">
    <property type="protein sequence ID" value="ABE48784.1"/>
    <property type="molecule type" value="Genomic_DNA"/>
</dbReference>
<dbReference type="RefSeq" id="WP_011478881.1">
    <property type="nucleotide sequence ID" value="NC_007947.1"/>
</dbReference>
<dbReference type="SMR" id="Q1H403"/>
<dbReference type="STRING" id="265072.Mfla_0514"/>
<dbReference type="KEGG" id="mfa:Mfla_0514"/>
<dbReference type="eggNOG" id="COG0343">
    <property type="taxonomic scope" value="Bacteria"/>
</dbReference>
<dbReference type="HOGENOM" id="CLU_022060_0_1_4"/>
<dbReference type="OrthoDB" id="9805417at2"/>
<dbReference type="UniPathway" id="UPA00392"/>
<dbReference type="Proteomes" id="UP000002440">
    <property type="component" value="Chromosome"/>
</dbReference>
<dbReference type="GO" id="GO:0005829">
    <property type="term" value="C:cytosol"/>
    <property type="evidence" value="ECO:0007669"/>
    <property type="project" value="TreeGrafter"/>
</dbReference>
<dbReference type="GO" id="GO:0046872">
    <property type="term" value="F:metal ion binding"/>
    <property type="evidence" value="ECO:0007669"/>
    <property type="project" value="UniProtKB-KW"/>
</dbReference>
<dbReference type="GO" id="GO:0008479">
    <property type="term" value="F:tRNA-guanosine(34) queuine transglycosylase activity"/>
    <property type="evidence" value="ECO:0007669"/>
    <property type="project" value="UniProtKB-UniRule"/>
</dbReference>
<dbReference type="GO" id="GO:0008616">
    <property type="term" value="P:queuosine biosynthetic process"/>
    <property type="evidence" value="ECO:0007669"/>
    <property type="project" value="UniProtKB-UniRule"/>
</dbReference>
<dbReference type="GO" id="GO:0002099">
    <property type="term" value="P:tRNA wobble guanine modification"/>
    <property type="evidence" value="ECO:0007669"/>
    <property type="project" value="TreeGrafter"/>
</dbReference>
<dbReference type="GO" id="GO:0101030">
    <property type="term" value="P:tRNA-guanine transglycosylation"/>
    <property type="evidence" value="ECO:0007669"/>
    <property type="project" value="InterPro"/>
</dbReference>
<dbReference type="FunFam" id="3.20.20.105:FF:000001">
    <property type="entry name" value="Queuine tRNA-ribosyltransferase"/>
    <property type="match status" value="1"/>
</dbReference>
<dbReference type="Gene3D" id="3.20.20.105">
    <property type="entry name" value="Queuine tRNA-ribosyltransferase-like"/>
    <property type="match status" value="1"/>
</dbReference>
<dbReference type="HAMAP" id="MF_00168">
    <property type="entry name" value="Q_tRNA_Tgt"/>
    <property type="match status" value="1"/>
</dbReference>
<dbReference type="InterPro" id="IPR050076">
    <property type="entry name" value="ArchSynthase1/Queuine_TRR"/>
</dbReference>
<dbReference type="InterPro" id="IPR004803">
    <property type="entry name" value="TGT"/>
</dbReference>
<dbReference type="InterPro" id="IPR036511">
    <property type="entry name" value="TGT-like_sf"/>
</dbReference>
<dbReference type="InterPro" id="IPR002616">
    <property type="entry name" value="tRNA_ribo_trans-like"/>
</dbReference>
<dbReference type="NCBIfam" id="TIGR00430">
    <property type="entry name" value="Q_tRNA_tgt"/>
    <property type="match status" value="1"/>
</dbReference>
<dbReference type="NCBIfam" id="TIGR00449">
    <property type="entry name" value="tgt_general"/>
    <property type="match status" value="1"/>
</dbReference>
<dbReference type="PANTHER" id="PTHR46499">
    <property type="entry name" value="QUEUINE TRNA-RIBOSYLTRANSFERASE"/>
    <property type="match status" value="1"/>
</dbReference>
<dbReference type="PANTHER" id="PTHR46499:SF1">
    <property type="entry name" value="QUEUINE TRNA-RIBOSYLTRANSFERASE"/>
    <property type="match status" value="1"/>
</dbReference>
<dbReference type="Pfam" id="PF01702">
    <property type="entry name" value="TGT"/>
    <property type="match status" value="1"/>
</dbReference>
<dbReference type="SUPFAM" id="SSF51713">
    <property type="entry name" value="tRNA-guanine transglycosylase"/>
    <property type="match status" value="1"/>
</dbReference>
<proteinExistence type="inferred from homology"/>
<sequence length="370" mass="41314">MEFTLIKQDGAARRGTVSLAHGDVQTPAFMPVGTYGAVKSLSPVEVRDTGAHILLGNTFHLWLRPGLEVIGEFGGLHRFMGWNGPILTDSGGFQVWSLGDLRKITEEGVRFRSPINGDSCFLTPEESMRIQKVLNSDIVMIFDECTPYPATPADARDSMLLSLRWAARSKAAHQGNPNALFGIIQGGMYEDLRDESLAGLTEIGFDGYAIGGLSVGEPKEDMLRILAHTTPKMPQDKPRYLMGVGTPEDLVAAVSHGVDMFDCVMPTRNARNGWLFTRHGDIKLKNARHRKDTRPLDEHCQCYTCLNFSRAYLHHLHRSGEILGARLNTIHNLHYYQELMLGMRQAIEQGRFEAFATEFRQGRQMLQQSA</sequence>